<gene>
    <name type="ordered locus">At1g47810</name>
    <name type="ORF">T2E6.10</name>
</gene>
<feature type="chain" id="PRO_0000274947" description="F-box protein At1g47810">
    <location>
        <begin position="1"/>
        <end position="351"/>
    </location>
</feature>
<feature type="domain" description="F-box" evidence="1">
    <location>
        <begin position="8"/>
        <end position="54"/>
    </location>
</feature>
<proteinExistence type="evidence at transcript level"/>
<evidence type="ECO:0000255" key="1">
    <source>
        <dbReference type="PROSITE-ProRule" id="PRU00080"/>
    </source>
</evidence>
<evidence type="ECO:0000305" key="2"/>
<organism>
    <name type="scientific">Arabidopsis thaliana</name>
    <name type="common">Mouse-ear cress</name>
    <dbReference type="NCBI Taxonomy" id="3702"/>
    <lineage>
        <taxon>Eukaryota</taxon>
        <taxon>Viridiplantae</taxon>
        <taxon>Streptophyta</taxon>
        <taxon>Embryophyta</taxon>
        <taxon>Tracheophyta</taxon>
        <taxon>Spermatophyta</taxon>
        <taxon>Magnoliopsida</taxon>
        <taxon>eudicotyledons</taxon>
        <taxon>Gunneridae</taxon>
        <taxon>Pentapetalae</taxon>
        <taxon>rosids</taxon>
        <taxon>malvids</taxon>
        <taxon>Brassicales</taxon>
        <taxon>Brassicaceae</taxon>
        <taxon>Camelineae</taxon>
        <taxon>Arabidopsis</taxon>
    </lineage>
</organism>
<sequence length="351" mass="40111">MADTEKSLQSLDPIPVDVLFEIFLNLPAKFLARFVCVSKLWAKIIRNQDFIRSFSFRSFRENKQHRLLFAFKNQIKGYQENWYFFSKSTHVSTPLYEPNSLVLPDQNINKFEALVGEEPPDFESSTVCHLKKMRYQNPSYVHGLISFLYGEEQIICNPSIGKSINLPTLGSSETIIGSFLGYDPIHAQYKVLCLNKSSLQFCGHQVLTLGAQNCSWRMIQCPTPHYPGTTSVCIDGVLYYSASRGFTMHEPLNLVRFDLRTESLEIASVFPEDFKSSVKPSLINYRGKVAVFSKYFCGDFGLWVLEDAKKQQWSKEQRISIRRGVIGRLPQGLQILGTSDMGEVIFAPNYF</sequence>
<comment type="sequence caution" evidence="2">
    <conflict type="erroneous gene model prediction">
        <sequence resource="EMBL-CDS" id="AAF99803"/>
    </conflict>
    <text>The predicted gene At1g47800 has been split into 2 genes: At1g47800 and At1g47810.</text>
</comment>
<name>FB46_ARATH</name>
<keyword id="KW-1185">Reference proteome</keyword>
<reference key="1">
    <citation type="journal article" date="2000" name="Nature">
        <title>Sequence and analysis of chromosome 1 of the plant Arabidopsis thaliana.</title>
        <authorList>
            <person name="Theologis A."/>
            <person name="Ecker J.R."/>
            <person name="Palm C.J."/>
            <person name="Federspiel N.A."/>
            <person name="Kaul S."/>
            <person name="White O."/>
            <person name="Alonso J."/>
            <person name="Altafi H."/>
            <person name="Araujo R."/>
            <person name="Bowman C.L."/>
            <person name="Brooks S.Y."/>
            <person name="Buehler E."/>
            <person name="Chan A."/>
            <person name="Chao Q."/>
            <person name="Chen H."/>
            <person name="Cheuk R.F."/>
            <person name="Chin C.W."/>
            <person name="Chung M.K."/>
            <person name="Conn L."/>
            <person name="Conway A.B."/>
            <person name="Conway A.R."/>
            <person name="Creasy T.H."/>
            <person name="Dewar K."/>
            <person name="Dunn P."/>
            <person name="Etgu P."/>
            <person name="Feldblyum T.V."/>
            <person name="Feng J.-D."/>
            <person name="Fong B."/>
            <person name="Fujii C.Y."/>
            <person name="Gill J.E."/>
            <person name="Goldsmith A.D."/>
            <person name="Haas B."/>
            <person name="Hansen N.F."/>
            <person name="Hughes B."/>
            <person name="Huizar L."/>
            <person name="Hunter J.L."/>
            <person name="Jenkins J."/>
            <person name="Johnson-Hopson C."/>
            <person name="Khan S."/>
            <person name="Khaykin E."/>
            <person name="Kim C.J."/>
            <person name="Koo H.L."/>
            <person name="Kremenetskaia I."/>
            <person name="Kurtz D.B."/>
            <person name="Kwan A."/>
            <person name="Lam B."/>
            <person name="Langin-Hooper S."/>
            <person name="Lee A."/>
            <person name="Lee J.M."/>
            <person name="Lenz C.A."/>
            <person name="Li J.H."/>
            <person name="Li Y.-P."/>
            <person name="Lin X."/>
            <person name="Liu S.X."/>
            <person name="Liu Z.A."/>
            <person name="Luros J.S."/>
            <person name="Maiti R."/>
            <person name="Marziali A."/>
            <person name="Militscher J."/>
            <person name="Miranda M."/>
            <person name="Nguyen M."/>
            <person name="Nierman W.C."/>
            <person name="Osborne B.I."/>
            <person name="Pai G."/>
            <person name="Peterson J."/>
            <person name="Pham P.K."/>
            <person name="Rizzo M."/>
            <person name="Rooney T."/>
            <person name="Rowley D."/>
            <person name="Sakano H."/>
            <person name="Salzberg S.L."/>
            <person name="Schwartz J.R."/>
            <person name="Shinn P."/>
            <person name="Southwick A.M."/>
            <person name="Sun H."/>
            <person name="Tallon L.J."/>
            <person name="Tambunga G."/>
            <person name="Toriumi M.J."/>
            <person name="Town C.D."/>
            <person name="Utterback T."/>
            <person name="Van Aken S."/>
            <person name="Vaysberg M."/>
            <person name="Vysotskaia V.S."/>
            <person name="Walker M."/>
            <person name="Wu D."/>
            <person name="Yu G."/>
            <person name="Fraser C.M."/>
            <person name="Venter J.C."/>
            <person name="Davis R.W."/>
        </authorList>
    </citation>
    <scope>NUCLEOTIDE SEQUENCE [LARGE SCALE GENOMIC DNA]</scope>
    <source>
        <strain>cv. Columbia</strain>
    </source>
</reference>
<reference key="2">
    <citation type="journal article" date="2017" name="Plant J.">
        <title>Araport11: a complete reannotation of the Arabidopsis thaliana reference genome.</title>
        <authorList>
            <person name="Cheng C.Y."/>
            <person name="Krishnakumar V."/>
            <person name="Chan A.P."/>
            <person name="Thibaud-Nissen F."/>
            <person name="Schobel S."/>
            <person name="Town C.D."/>
        </authorList>
    </citation>
    <scope>GENOME REANNOTATION</scope>
    <source>
        <strain>cv. Columbia</strain>
    </source>
</reference>
<reference key="3">
    <citation type="submission" date="2005-05" db="EMBL/GenBank/DDBJ databases">
        <authorList>
            <person name="Underwood B.A."/>
            <person name="Xiao Y.-L."/>
            <person name="Moskal W.A. Jr."/>
            <person name="Monaghan E.L."/>
            <person name="Wang W."/>
            <person name="Redman J.C."/>
            <person name="Wu H.C."/>
            <person name="Utterback T."/>
            <person name="Town C.D."/>
        </authorList>
    </citation>
    <scope>NUCLEOTIDE SEQUENCE [LARGE SCALE MRNA]</scope>
    <source>
        <strain>cv. Columbia</strain>
    </source>
</reference>
<dbReference type="EMBL" id="AC012463">
    <property type="protein sequence ID" value="AAF99803.1"/>
    <property type="status" value="ALT_SEQ"/>
    <property type="molecule type" value="Genomic_DNA"/>
</dbReference>
<dbReference type="EMBL" id="CP002684">
    <property type="protein sequence ID" value="AEE32216.1"/>
    <property type="molecule type" value="Genomic_DNA"/>
</dbReference>
<dbReference type="EMBL" id="DQ056486">
    <property type="protein sequence ID" value="AAY78643.1"/>
    <property type="molecule type" value="mRNA"/>
</dbReference>
<dbReference type="PIR" id="F96518">
    <property type="entry name" value="F96518"/>
</dbReference>
<dbReference type="RefSeq" id="NP_175215.1">
    <property type="nucleotide sequence ID" value="NM_103677.1"/>
</dbReference>
<dbReference type="SMR" id="Q4PT00"/>
<dbReference type="FunCoup" id="Q4PT00">
    <property type="interactions" value="3"/>
</dbReference>
<dbReference type="PaxDb" id="3702-AT1G47810.1"/>
<dbReference type="EnsemblPlants" id="AT1G47810.1">
    <property type="protein sequence ID" value="AT1G47810.1"/>
    <property type="gene ID" value="AT1G47810"/>
</dbReference>
<dbReference type="GeneID" id="841195"/>
<dbReference type="Gramene" id="AT1G47810.1">
    <property type="protein sequence ID" value="AT1G47810.1"/>
    <property type="gene ID" value="AT1G47810"/>
</dbReference>
<dbReference type="KEGG" id="ath:AT1G47810"/>
<dbReference type="Araport" id="AT1G47810"/>
<dbReference type="TAIR" id="AT1G47810"/>
<dbReference type="HOGENOM" id="CLU_027176_8_1_1"/>
<dbReference type="InParanoid" id="Q4PT00"/>
<dbReference type="OMA" id="SKLWAKI"/>
<dbReference type="PhylomeDB" id="Q4PT00"/>
<dbReference type="PRO" id="PR:Q4PT00"/>
<dbReference type="Proteomes" id="UP000006548">
    <property type="component" value="Chromosome 1"/>
</dbReference>
<dbReference type="ExpressionAtlas" id="Q4PT00">
    <property type="expression patterns" value="baseline and differential"/>
</dbReference>
<dbReference type="Gene3D" id="1.20.1280.50">
    <property type="match status" value="1"/>
</dbReference>
<dbReference type="InterPro" id="IPR013187">
    <property type="entry name" value="F-box-assoc_dom_typ3"/>
</dbReference>
<dbReference type="InterPro" id="IPR017451">
    <property type="entry name" value="F-box-assoc_interact_dom"/>
</dbReference>
<dbReference type="InterPro" id="IPR036047">
    <property type="entry name" value="F-box-like_dom_sf"/>
</dbReference>
<dbReference type="InterPro" id="IPR001810">
    <property type="entry name" value="F-box_dom"/>
</dbReference>
<dbReference type="NCBIfam" id="TIGR01640">
    <property type="entry name" value="F_box_assoc_1"/>
    <property type="match status" value="1"/>
</dbReference>
<dbReference type="PANTHER" id="PTHR31111">
    <property type="entry name" value="BNAA05G37150D PROTEIN-RELATED"/>
    <property type="match status" value="1"/>
</dbReference>
<dbReference type="PANTHER" id="PTHR31111:SF132">
    <property type="entry name" value="F-BOX ASSOCIATED UBIQUITINATION EFFECTOR FAMILY PROTEIN-RELATED"/>
    <property type="match status" value="1"/>
</dbReference>
<dbReference type="Pfam" id="PF00646">
    <property type="entry name" value="F-box"/>
    <property type="match status" value="1"/>
</dbReference>
<dbReference type="Pfam" id="PF08268">
    <property type="entry name" value="FBA_3"/>
    <property type="match status" value="1"/>
</dbReference>
<dbReference type="SMART" id="SM00256">
    <property type="entry name" value="FBOX"/>
    <property type="match status" value="1"/>
</dbReference>
<dbReference type="SUPFAM" id="SSF81383">
    <property type="entry name" value="F-box domain"/>
    <property type="match status" value="1"/>
</dbReference>
<dbReference type="PROSITE" id="PS50181">
    <property type="entry name" value="FBOX"/>
    <property type="match status" value="1"/>
</dbReference>
<accession>Q4PT00</accession>
<accession>Q9FZF9</accession>
<protein>
    <recommendedName>
        <fullName>F-box protein At1g47810</fullName>
    </recommendedName>
</protein>